<organism>
    <name type="scientific">Escherichia coli</name>
    <dbReference type="NCBI Taxonomy" id="562"/>
    <lineage>
        <taxon>Bacteria</taxon>
        <taxon>Pseudomonadati</taxon>
        <taxon>Pseudomonadota</taxon>
        <taxon>Gammaproteobacteria</taxon>
        <taxon>Enterobacterales</taxon>
        <taxon>Enterobacteriaceae</taxon>
        <taxon>Escherichia</taxon>
    </lineage>
</organism>
<dbReference type="EMBL" id="X03391">
    <property type="protein sequence ID" value="CAA27125.1"/>
    <property type="molecule type" value="Genomic_DNA"/>
</dbReference>
<dbReference type="EMBL" id="X61239">
    <property type="protein sequence ID" value="CAA43561.1"/>
    <property type="molecule type" value="Genomic_DNA"/>
</dbReference>
<dbReference type="EMBL" id="X55249">
    <property type="protein sequence ID" value="CAA38989.1"/>
    <property type="molecule type" value="Genomic_DNA"/>
</dbReference>
<dbReference type="EMBL" id="M63747">
    <property type="protein sequence ID" value="AAA24287.1"/>
    <property type="molecule type" value="Genomic_DNA"/>
</dbReference>
<dbReference type="PIR" id="B25121">
    <property type="entry name" value="RGECPB"/>
</dbReference>
<dbReference type="RefSeq" id="WP_000930062.1">
    <property type="nucleotide sequence ID" value="NZ_WXYY01000003.1"/>
</dbReference>
<dbReference type="SMR" id="P04744"/>
<dbReference type="OMA" id="WLLVEIS"/>
<dbReference type="GO" id="GO:0005737">
    <property type="term" value="C:cytoplasm"/>
    <property type="evidence" value="ECO:0007669"/>
    <property type="project" value="UniProtKB-SubCell"/>
</dbReference>
<dbReference type="GO" id="GO:0006355">
    <property type="term" value="P:regulation of DNA-templated transcription"/>
    <property type="evidence" value="ECO:0007669"/>
    <property type="project" value="InterPro"/>
</dbReference>
<dbReference type="Gene3D" id="1.10.10.2690">
    <property type="match status" value="1"/>
</dbReference>
<dbReference type="InterPro" id="IPR004356">
    <property type="entry name" value="Adhesin_operon_reg_prot"/>
</dbReference>
<dbReference type="InterPro" id="IPR053721">
    <property type="entry name" value="Fimbrial_Adhesin_Reg"/>
</dbReference>
<dbReference type="Pfam" id="PF03333">
    <property type="entry name" value="PapB"/>
    <property type="match status" value="1"/>
</dbReference>
<dbReference type="PRINTS" id="PR01554">
    <property type="entry name" value="FIMREGULATRY"/>
</dbReference>
<feature type="chain" id="PRO_0000058230" description="Major pilu subunit operon regulatory protein PapB">
    <location>
        <begin position="1"/>
        <end position="104"/>
    </location>
</feature>
<protein>
    <recommendedName>
        <fullName>Major pilu subunit operon regulatory protein PapB</fullName>
    </recommendedName>
</protein>
<reference key="1">
    <citation type="journal article" date="1985" name="EMBO J.">
        <title>Transcriptional activation of a pap pilus virulence operon from uropathogenic Escherichia coli.</title>
        <authorList>
            <person name="Baga M."/>
            <person name="Goeransson M."/>
            <person name="Normark S."/>
            <person name="Uhlin B.E."/>
        </authorList>
    </citation>
    <scope>NUCLEOTIDE SEQUENCE [GENOMIC DNA]</scope>
    <source>
        <strain>ATCC 700336 / J96 / UPEC</strain>
    </source>
</reference>
<reference key="2">
    <citation type="journal article" date="1992" name="Mol. Microbiol.">
        <title>Horizontal gene transfer of the Escherichia coli pap and prs pili operons as a mechanism for the development of tissue-specific adhesive properties.</title>
        <authorList>
            <person name="Marklund B.-I."/>
            <person name="Tennent J.M."/>
            <person name="Garcia E."/>
            <person name="Hamers A."/>
            <person name="Baga M."/>
            <person name="Lindberg F."/>
            <person name="Gaastra W."/>
            <person name="Normark S."/>
        </authorList>
    </citation>
    <scope>NUCLEOTIDE SEQUENCE [GENOMIC DNA]</scope>
    <source>
        <strain>ATCC 700336 / J96 / UPEC</strain>
    </source>
</reference>
<reference key="3">
    <citation type="journal article" date="1989" name="EMBO J.">
        <title>Autoregulation and multiple DNA interactions by a transcriptional regulatory protein in E. coli pili biogenesis.</title>
        <authorList>
            <person name="Forsman K."/>
            <person name="Goeransson M."/>
            <person name="Uhlin B.E."/>
        </authorList>
    </citation>
    <scope>CHARACTERIZATION</scope>
</reference>
<proteinExistence type="evidence at protein level"/>
<sequence length="104" mass="11695">MAHHEVISRSGNAFLLNIRESVLLPGSMSEMHFFLLIGISSIHSDRVILAMKDYLVGGHSRKEVCEKYQMNNGYFSTTLGRLIRLNALAARLAPYYTDESSAFD</sequence>
<comment type="function">
    <text>May act as both positive and negative regulator of pap transcription. Might positively regulate levels of papI and/or mbf. Its autoregulatory mode of action involves differential binding to separate sites.</text>
</comment>
<comment type="subcellular location">
    <subcellularLocation>
        <location>Cytoplasm</location>
    </subcellularLocation>
</comment>
<keyword id="KW-0010">Activator</keyword>
<keyword id="KW-0963">Cytoplasm</keyword>
<keyword id="KW-1029">Fimbrium biogenesis</keyword>
<keyword id="KW-0678">Repressor</keyword>
<keyword id="KW-0804">Transcription</keyword>
<keyword id="KW-0805">Transcription regulation</keyword>
<gene>
    <name type="primary">papB</name>
</gene>
<accession>P04744</accession>
<name>PAPB_ECOLX</name>